<dbReference type="PIR" id="A02030">
    <property type="entry name" value="HVMS23"/>
</dbReference>
<dbReference type="SMR" id="P01748"/>
<dbReference type="FunCoup" id="P01748">
    <property type="interactions" value="587"/>
</dbReference>
<dbReference type="jPOST" id="P01748"/>
<dbReference type="PeptideAtlas" id="P01748"/>
<dbReference type="InParanoid" id="P01748"/>
<dbReference type="Proteomes" id="UP000000589">
    <property type="component" value="Unplaced"/>
</dbReference>
<dbReference type="RNAct" id="P01748">
    <property type="molecule type" value="protein"/>
</dbReference>
<dbReference type="GO" id="GO:0005576">
    <property type="term" value="C:extracellular region"/>
    <property type="evidence" value="ECO:0007669"/>
    <property type="project" value="UniProtKB-ARBA"/>
</dbReference>
<dbReference type="GO" id="GO:0019814">
    <property type="term" value="C:immunoglobulin complex"/>
    <property type="evidence" value="ECO:0007669"/>
    <property type="project" value="UniProtKB-KW"/>
</dbReference>
<dbReference type="GO" id="GO:0003823">
    <property type="term" value="F:antigen binding"/>
    <property type="evidence" value="ECO:0000318"/>
    <property type="project" value="GO_Central"/>
</dbReference>
<dbReference type="GO" id="GO:0016064">
    <property type="term" value="P:immunoglobulin mediated immune response"/>
    <property type="evidence" value="ECO:0000318"/>
    <property type="project" value="GO_Central"/>
</dbReference>
<dbReference type="CDD" id="cd04981">
    <property type="entry name" value="IgV_H"/>
    <property type="match status" value="1"/>
</dbReference>
<dbReference type="FunFam" id="2.60.40.10:FF:001025">
    <property type="entry name" value="Immunoglobulin heavy variable V1-74"/>
    <property type="match status" value="1"/>
</dbReference>
<dbReference type="Gene3D" id="2.60.40.10">
    <property type="entry name" value="Immunoglobulins"/>
    <property type="match status" value="1"/>
</dbReference>
<dbReference type="InterPro" id="IPR007110">
    <property type="entry name" value="Ig-like_dom"/>
</dbReference>
<dbReference type="InterPro" id="IPR036179">
    <property type="entry name" value="Ig-like_dom_sf"/>
</dbReference>
<dbReference type="InterPro" id="IPR013783">
    <property type="entry name" value="Ig-like_fold"/>
</dbReference>
<dbReference type="InterPro" id="IPR013106">
    <property type="entry name" value="Ig_V-set"/>
</dbReference>
<dbReference type="InterPro" id="IPR050199">
    <property type="entry name" value="IgHV"/>
</dbReference>
<dbReference type="PANTHER" id="PTHR23266">
    <property type="entry name" value="IMMUNOGLOBULIN HEAVY CHAIN"/>
    <property type="match status" value="1"/>
</dbReference>
<dbReference type="Pfam" id="PF07686">
    <property type="entry name" value="V-set"/>
    <property type="match status" value="1"/>
</dbReference>
<dbReference type="SMART" id="SM00406">
    <property type="entry name" value="IGv"/>
    <property type="match status" value="1"/>
</dbReference>
<dbReference type="SUPFAM" id="SSF48726">
    <property type="entry name" value="Immunoglobulin"/>
    <property type="match status" value="1"/>
</dbReference>
<dbReference type="PROSITE" id="PS50835">
    <property type="entry name" value="IG_LIKE"/>
    <property type="match status" value="1"/>
</dbReference>
<accession>P01748</accession>
<comment type="miscellaneous">
    <text>This germline gene belongs to a set of closely related genes that could encode V regions of NPb antibodies.</text>
</comment>
<name>HVM04_MOUSE</name>
<keyword id="KW-1064">Adaptive immunity</keyword>
<keyword id="KW-1015">Disulfide bond</keyword>
<keyword id="KW-0391">Immunity</keyword>
<keyword id="KW-1280">Immunoglobulin</keyword>
<keyword id="KW-1185">Reference proteome</keyword>
<keyword id="KW-0732">Signal</keyword>
<evidence type="ECO:0000255" key="1">
    <source>
        <dbReference type="PROSITE-ProRule" id="PRU00114"/>
    </source>
</evidence>
<reference key="1">
    <citation type="journal article" date="1981" name="Cell">
        <title>Heavy chain variable region contribution to the NPb family of antibodies: somatic mutation evident in a gamma 2a variable region.</title>
        <authorList>
            <person name="Bothwell A.L.M."/>
            <person name="Paskind M."/>
            <person name="Reth M."/>
            <person name="Imanishi-Kari T."/>
            <person name="Rajewsky K."/>
            <person name="Baltimore D."/>
        </authorList>
    </citation>
    <scope>NUCLEOTIDE SEQUENCE</scope>
    <source>
        <strain>C57BL/6J</strain>
    </source>
</reference>
<sequence>MGWSCIILFLVAAANGVHSQVQLQQPGTELVKPGASVKLSCKASGYTFTSYWMHWVKQRPGQGLEWIGNINPGNGGTNYNEKFKSKVTLTVDKSSSTAYTQLSSLTSEDSAVYYCAR</sequence>
<feature type="signal peptide">
    <location>
        <begin position="1"/>
        <end position="19"/>
    </location>
</feature>
<feature type="chain" id="PRO_0000015217" description="Ig heavy chain V region 23">
    <location>
        <begin position="20"/>
        <end position="117"/>
    </location>
</feature>
<feature type="region of interest" description="Framework-1">
    <location>
        <begin position="20"/>
        <end position="49"/>
    </location>
</feature>
<feature type="region of interest" description="Complementarity-determining-1">
    <location>
        <begin position="50"/>
        <end position="54"/>
    </location>
</feature>
<feature type="region of interest" description="Framework-2">
    <location>
        <begin position="55"/>
        <end position="68"/>
    </location>
</feature>
<feature type="region of interest" description="Complementarity-determining-2">
    <location>
        <begin position="69"/>
        <end position="85"/>
    </location>
</feature>
<feature type="region of interest" description="Framework-3">
    <location>
        <begin position="86"/>
        <end position="117"/>
    </location>
</feature>
<feature type="disulfide bond" evidence="1">
    <location>
        <begin position="41"/>
        <end position="115"/>
    </location>
</feature>
<feature type="non-terminal residue">
    <location>
        <position position="117"/>
    </location>
</feature>
<protein>
    <recommendedName>
        <fullName>Ig heavy chain V region 23</fullName>
    </recommendedName>
</protein>
<organism>
    <name type="scientific">Mus musculus</name>
    <name type="common">Mouse</name>
    <dbReference type="NCBI Taxonomy" id="10090"/>
    <lineage>
        <taxon>Eukaryota</taxon>
        <taxon>Metazoa</taxon>
        <taxon>Chordata</taxon>
        <taxon>Craniata</taxon>
        <taxon>Vertebrata</taxon>
        <taxon>Euteleostomi</taxon>
        <taxon>Mammalia</taxon>
        <taxon>Eutheria</taxon>
        <taxon>Euarchontoglires</taxon>
        <taxon>Glires</taxon>
        <taxon>Rodentia</taxon>
        <taxon>Myomorpha</taxon>
        <taxon>Muroidea</taxon>
        <taxon>Muridae</taxon>
        <taxon>Murinae</taxon>
        <taxon>Mus</taxon>
        <taxon>Mus</taxon>
    </lineage>
</organism>
<proteinExistence type="predicted"/>